<proteinExistence type="inferred from homology"/>
<accession>A3DBL4</accession>
<feature type="chain" id="PRO_0000288142" description="tRNA (guanine-N(7)-)-methyltransferase">
    <location>
        <begin position="1"/>
        <end position="218"/>
    </location>
</feature>
<feature type="binding site" evidence="1">
    <location>
        <position position="43"/>
    </location>
    <ligand>
        <name>S-adenosyl-L-methionine</name>
        <dbReference type="ChEBI" id="CHEBI:59789"/>
    </ligand>
</feature>
<feature type="binding site" evidence="1">
    <location>
        <position position="68"/>
    </location>
    <ligand>
        <name>S-adenosyl-L-methionine</name>
        <dbReference type="ChEBI" id="CHEBI:59789"/>
    </ligand>
</feature>
<feature type="binding site" evidence="1">
    <location>
        <position position="101"/>
    </location>
    <ligand>
        <name>S-adenosyl-L-methionine</name>
        <dbReference type="ChEBI" id="CHEBI:59789"/>
    </ligand>
</feature>
<feature type="binding site" evidence="1">
    <location>
        <position position="124"/>
    </location>
    <ligand>
        <name>S-adenosyl-L-methionine</name>
        <dbReference type="ChEBI" id="CHEBI:59789"/>
    </ligand>
</feature>
<feature type="binding site" evidence="1">
    <location>
        <position position="128"/>
    </location>
    <ligand>
        <name>substrate</name>
    </ligand>
</feature>
<feature type="binding site" evidence="1">
    <location>
        <position position="160"/>
    </location>
    <ligand>
        <name>substrate</name>
    </ligand>
</feature>
<comment type="function">
    <text evidence="1">Catalyzes the formation of N(7)-methylguanine at position 46 (m7G46) in tRNA.</text>
</comment>
<comment type="catalytic activity">
    <reaction evidence="1">
        <text>guanosine(46) in tRNA + S-adenosyl-L-methionine = N(7)-methylguanosine(46) in tRNA + S-adenosyl-L-homocysteine</text>
        <dbReference type="Rhea" id="RHEA:42708"/>
        <dbReference type="Rhea" id="RHEA-COMP:10188"/>
        <dbReference type="Rhea" id="RHEA-COMP:10189"/>
        <dbReference type="ChEBI" id="CHEBI:57856"/>
        <dbReference type="ChEBI" id="CHEBI:59789"/>
        <dbReference type="ChEBI" id="CHEBI:74269"/>
        <dbReference type="ChEBI" id="CHEBI:74480"/>
        <dbReference type="EC" id="2.1.1.33"/>
    </reaction>
</comment>
<comment type="pathway">
    <text evidence="1">tRNA modification; N(7)-methylguanine-tRNA biosynthesis.</text>
</comment>
<comment type="similarity">
    <text evidence="1">Belongs to the class I-like SAM-binding methyltransferase superfamily. TrmB family.</text>
</comment>
<protein>
    <recommendedName>
        <fullName evidence="1">tRNA (guanine-N(7)-)-methyltransferase</fullName>
        <ecNumber evidence="1">2.1.1.33</ecNumber>
    </recommendedName>
    <alternativeName>
        <fullName evidence="1">tRNA (guanine(46)-N(7))-methyltransferase</fullName>
    </alternativeName>
    <alternativeName>
        <fullName evidence="1">tRNA(m7G46)-methyltransferase</fullName>
    </alternativeName>
</protein>
<evidence type="ECO:0000255" key="1">
    <source>
        <dbReference type="HAMAP-Rule" id="MF_01057"/>
    </source>
</evidence>
<name>TRMB_ACET2</name>
<keyword id="KW-0489">Methyltransferase</keyword>
<keyword id="KW-1185">Reference proteome</keyword>
<keyword id="KW-0949">S-adenosyl-L-methionine</keyword>
<keyword id="KW-0808">Transferase</keyword>
<keyword id="KW-0819">tRNA processing</keyword>
<gene>
    <name evidence="1" type="primary">trmB</name>
    <name type="ordered locus">Cthe_0102</name>
</gene>
<dbReference type="EC" id="2.1.1.33" evidence="1"/>
<dbReference type="EMBL" id="CP000568">
    <property type="protein sequence ID" value="ABN51343.1"/>
    <property type="molecule type" value="Genomic_DNA"/>
</dbReference>
<dbReference type="RefSeq" id="WP_003512099.1">
    <property type="nucleotide sequence ID" value="NC_009012.1"/>
</dbReference>
<dbReference type="SMR" id="A3DBL4"/>
<dbReference type="STRING" id="203119.Cthe_0102"/>
<dbReference type="GeneID" id="35803802"/>
<dbReference type="KEGG" id="cth:Cthe_0102"/>
<dbReference type="eggNOG" id="COG0220">
    <property type="taxonomic scope" value="Bacteria"/>
</dbReference>
<dbReference type="HOGENOM" id="CLU_050910_2_1_9"/>
<dbReference type="OrthoDB" id="9802090at2"/>
<dbReference type="UniPathway" id="UPA00989"/>
<dbReference type="Proteomes" id="UP000002145">
    <property type="component" value="Chromosome"/>
</dbReference>
<dbReference type="GO" id="GO:0043527">
    <property type="term" value="C:tRNA methyltransferase complex"/>
    <property type="evidence" value="ECO:0007669"/>
    <property type="project" value="TreeGrafter"/>
</dbReference>
<dbReference type="GO" id="GO:0008176">
    <property type="term" value="F:tRNA (guanine(46)-N7)-methyltransferase activity"/>
    <property type="evidence" value="ECO:0007669"/>
    <property type="project" value="UniProtKB-UniRule"/>
</dbReference>
<dbReference type="CDD" id="cd02440">
    <property type="entry name" value="AdoMet_MTases"/>
    <property type="match status" value="1"/>
</dbReference>
<dbReference type="Gene3D" id="3.40.50.150">
    <property type="entry name" value="Vaccinia Virus protein VP39"/>
    <property type="match status" value="1"/>
</dbReference>
<dbReference type="HAMAP" id="MF_01057">
    <property type="entry name" value="tRNA_methyltr_TrmB"/>
    <property type="match status" value="1"/>
</dbReference>
<dbReference type="InterPro" id="IPR022272">
    <property type="entry name" value="Lipocalin_CS"/>
</dbReference>
<dbReference type="InterPro" id="IPR029063">
    <property type="entry name" value="SAM-dependent_MTases_sf"/>
</dbReference>
<dbReference type="InterPro" id="IPR003358">
    <property type="entry name" value="tRNA_(Gua-N-7)_MeTrfase_Trmb"/>
</dbReference>
<dbReference type="InterPro" id="IPR055361">
    <property type="entry name" value="tRNA_methyltr_TrmB_bact"/>
</dbReference>
<dbReference type="NCBIfam" id="NF001080">
    <property type="entry name" value="PRK00121.2-2"/>
    <property type="match status" value="1"/>
</dbReference>
<dbReference type="NCBIfam" id="TIGR00091">
    <property type="entry name" value="tRNA (guanosine(46)-N7)-methyltransferase TrmB"/>
    <property type="match status" value="1"/>
</dbReference>
<dbReference type="PANTHER" id="PTHR23417">
    <property type="entry name" value="3-DEOXY-D-MANNO-OCTULOSONIC-ACID TRANSFERASE/TRNA GUANINE-N 7 - -METHYLTRANSFERASE"/>
    <property type="match status" value="1"/>
</dbReference>
<dbReference type="PANTHER" id="PTHR23417:SF14">
    <property type="entry name" value="PENTACOTRIPEPTIDE-REPEAT REGION OF PRORP DOMAIN-CONTAINING PROTEIN"/>
    <property type="match status" value="1"/>
</dbReference>
<dbReference type="Pfam" id="PF02390">
    <property type="entry name" value="Methyltransf_4"/>
    <property type="match status" value="1"/>
</dbReference>
<dbReference type="SUPFAM" id="SSF53335">
    <property type="entry name" value="S-adenosyl-L-methionine-dependent methyltransferases"/>
    <property type="match status" value="1"/>
</dbReference>
<dbReference type="PROSITE" id="PS51625">
    <property type="entry name" value="SAM_MT_TRMB"/>
    <property type="match status" value="1"/>
</dbReference>
<reference key="1">
    <citation type="submission" date="2007-02" db="EMBL/GenBank/DDBJ databases">
        <title>Complete sequence of Clostridium thermocellum ATCC 27405.</title>
        <authorList>
            <consortium name="US DOE Joint Genome Institute"/>
            <person name="Copeland A."/>
            <person name="Lucas S."/>
            <person name="Lapidus A."/>
            <person name="Barry K."/>
            <person name="Detter J.C."/>
            <person name="Glavina del Rio T."/>
            <person name="Hammon N."/>
            <person name="Israni S."/>
            <person name="Dalin E."/>
            <person name="Tice H."/>
            <person name="Pitluck S."/>
            <person name="Chertkov O."/>
            <person name="Brettin T."/>
            <person name="Bruce D."/>
            <person name="Han C."/>
            <person name="Tapia R."/>
            <person name="Gilna P."/>
            <person name="Schmutz J."/>
            <person name="Larimer F."/>
            <person name="Land M."/>
            <person name="Hauser L."/>
            <person name="Kyrpides N."/>
            <person name="Mikhailova N."/>
            <person name="Wu J.H.D."/>
            <person name="Newcomb M."/>
            <person name="Richardson P."/>
        </authorList>
    </citation>
    <scope>NUCLEOTIDE SEQUENCE [LARGE SCALE GENOMIC DNA]</scope>
    <source>
        <strain>ATCC 27405 / DSM 1237 / JCM 9322 / NBRC 103400 / NCIMB 10682 / NRRL B-4536 / VPI 7372</strain>
    </source>
</reference>
<sequence>MRLRKKPWARPALEACSFFVINPTEYKGKWREVFGNSNEIWLELGCGKGGFISKLASTNPDKNFIAVDIKDEVLALAMKKIENEYALIGAETKNIRLMAHEIMLIHRMLDENDQIGRIFINFCNPWPKNRHKARRLTHPNQLNQYRTFLAPNGQIWFKTDDTMLFQDSIKYFEQCNFNIVYLTEDLHASGFEGNIETEHERMFLEQGCKIKFLIAEKK</sequence>
<organism>
    <name type="scientific">Acetivibrio thermocellus (strain ATCC 27405 / DSM 1237 / JCM 9322 / NBRC 103400 / NCIMB 10682 / NRRL B-4536 / VPI 7372)</name>
    <name type="common">Clostridium thermocellum</name>
    <dbReference type="NCBI Taxonomy" id="203119"/>
    <lineage>
        <taxon>Bacteria</taxon>
        <taxon>Bacillati</taxon>
        <taxon>Bacillota</taxon>
        <taxon>Clostridia</taxon>
        <taxon>Eubacteriales</taxon>
        <taxon>Oscillospiraceae</taxon>
        <taxon>Acetivibrio</taxon>
    </lineage>
</organism>